<evidence type="ECO:0000255" key="1">
    <source>
        <dbReference type="HAMAP-Rule" id="MF_00191"/>
    </source>
</evidence>
<organism>
    <name type="scientific">Anoxybacillus flavithermus (strain DSM 21510 / WK1)</name>
    <dbReference type="NCBI Taxonomy" id="491915"/>
    <lineage>
        <taxon>Bacteria</taxon>
        <taxon>Bacillati</taxon>
        <taxon>Bacillota</taxon>
        <taxon>Bacilli</taxon>
        <taxon>Bacillales</taxon>
        <taxon>Anoxybacillaceae</taxon>
        <taxon>Anoxybacillus</taxon>
    </lineage>
</organism>
<dbReference type="EC" id="1.17.7.4" evidence="1"/>
<dbReference type="EMBL" id="CP000922">
    <property type="protein sequence ID" value="ACJ33239.1"/>
    <property type="molecule type" value="Genomic_DNA"/>
</dbReference>
<dbReference type="RefSeq" id="WP_012574527.1">
    <property type="nucleotide sequence ID" value="NC_011567.1"/>
</dbReference>
<dbReference type="SMR" id="B7GH78"/>
<dbReference type="STRING" id="491915.Aflv_0861"/>
<dbReference type="GeneID" id="7037118"/>
<dbReference type="KEGG" id="afl:Aflv_0861"/>
<dbReference type="PATRIC" id="fig|491915.6.peg.881"/>
<dbReference type="eggNOG" id="COG0761">
    <property type="taxonomic scope" value="Bacteria"/>
</dbReference>
<dbReference type="HOGENOM" id="CLU_027486_0_0_9"/>
<dbReference type="UniPathway" id="UPA00056">
    <property type="reaction ID" value="UER00097"/>
</dbReference>
<dbReference type="UniPathway" id="UPA00059">
    <property type="reaction ID" value="UER00105"/>
</dbReference>
<dbReference type="Proteomes" id="UP000000742">
    <property type="component" value="Chromosome"/>
</dbReference>
<dbReference type="GO" id="GO:0051539">
    <property type="term" value="F:4 iron, 4 sulfur cluster binding"/>
    <property type="evidence" value="ECO:0007669"/>
    <property type="project" value="UniProtKB-UniRule"/>
</dbReference>
<dbReference type="GO" id="GO:0051745">
    <property type="term" value="F:4-hydroxy-3-methylbut-2-enyl diphosphate reductase activity"/>
    <property type="evidence" value="ECO:0007669"/>
    <property type="project" value="UniProtKB-UniRule"/>
</dbReference>
<dbReference type="GO" id="GO:0046872">
    <property type="term" value="F:metal ion binding"/>
    <property type="evidence" value="ECO:0007669"/>
    <property type="project" value="UniProtKB-KW"/>
</dbReference>
<dbReference type="GO" id="GO:0050992">
    <property type="term" value="P:dimethylallyl diphosphate biosynthetic process"/>
    <property type="evidence" value="ECO:0007669"/>
    <property type="project" value="UniProtKB-UniRule"/>
</dbReference>
<dbReference type="GO" id="GO:0019288">
    <property type="term" value="P:isopentenyl diphosphate biosynthetic process, methylerythritol 4-phosphate pathway"/>
    <property type="evidence" value="ECO:0007669"/>
    <property type="project" value="UniProtKB-UniRule"/>
</dbReference>
<dbReference type="GO" id="GO:0016114">
    <property type="term" value="P:terpenoid biosynthetic process"/>
    <property type="evidence" value="ECO:0007669"/>
    <property type="project" value="UniProtKB-UniRule"/>
</dbReference>
<dbReference type="CDD" id="cd13944">
    <property type="entry name" value="lytB_ispH"/>
    <property type="match status" value="1"/>
</dbReference>
<dbReference type="Gene3D" id="3.40.50.11270">
    <property type="match status" value="1"/>
</dbReference>
<dbReference type="Gene3D" id="3.40.1010.20">
    <property type="entry name" value="4-hydroxy-3-methylbut-2-enyl diphosphate reductase, catalytic domain"/>
    <property type="match status" value="2"/>
</dbReference>
<dbReference type="HAMAP" id="MF_00191">
    <property type="entry name" value="IspH"/>
    <property type="match status" value="1"/>
</dbReference>
<dbReference type="InterPro" id="IPR003451">
    <property type="entry name" value="LytB/IspH"/>
</dbReference>
<dbReference type="NCBIfam" id="TIGR00216">
    <property type="entry name" value="ispH_lytB"/>
    <property type="match status" value="1"/>
</dbReference>
<dbReference type="NCBIfam" id="NF002187">
    <property type="entry name" value="PRK01045.1-1"/>
    <property type="match status" value="1"/>
</dbReference>
<dbReference type="PANTHER" id="PTHR30426">
    <property type="entry name" value="4-HYDROXY-3-METHYLBUT-2-ENYL DIPHOSPHATE REDUCTASE"/>
    <property type="match status" value="1"/>
</dbReference>
<dbReference type="PANTHER" id="PTHR30426:SF0">
    <property type="entry name" value="4-HYDROXY-3-METHYLBUT-2-ENYL DIPHOSPHATE REDUCTASE"/>
    <property type="match status" value="1"/>
</dbReference>
<dbReference type="Pfam" id="PF02401">
    <property type="entry name" value="LYTB"/>
    <property type="match status" value="1"/>
</dbReference>
<protein>
    <recommendedName>
        <fullName evidence="1">4-hydroxy-3-methylbut-2-enyl diphosphate reductase</fullName>
        <shortName evidence="1">HMBPP reductase</shortName>
        <ecNumber evidence="1">1.17.7.4</ecNumber>
    </recommendedName>
</protein>
<gene>
    <name evidence="1" type="primary">ispH</name>
    <name type="ordered locus">Aflv_0861</name>
</gene>
<reference key="1">
    <citation type="journal article" date="2008" name="Genome Biol.">
        <title>Encapsulated in silica: genome, proteome and physiology of the thermophilic bacterium Anoxybacillus flavithermus WK1.</title>
        <authorList>
            <person name="Saw J.H."/>
            <person name="Mountain B.W."/>
            <person name="Feng L."/>
            <person name="Omelchenko M.V."/>
            <person name="Hou S."/>
            <person name="Saito J.A."/>
            <person name="Stott M.B."/>
            <person name="Li D."/>
            <person name="Zhao G."/>
            <person name="Wu J."/>
            <person name="Galperin M.Y."/>
            <person name="Koonin E.V."/>
            <person name="Makarova K.S."/>
            <person name="Wolf Y.I."/>
            <person name="Rigden D.J."/>
            <person name="Dunfield P.F."/>
            <person name="Wang L."/>
            <person name="Alam M."/>
        </authorList>
    </citation>
    <scope>NUCLEOTIDE SEQUENCE [LARGE SCALE GENOMIC DNA]</scope>
    <source>
        <strain>DSM 21510 / WK1</strain>
    </source>
</reference>
<proteinExistence type="inferred from homology"/>
<comment type="function">
    <text evidence="1">Catalyzes the conversion of 1-hydroxy-2-methyl-2-(E)-butenyl 4-diphosphate (HMBPP) into a mixture of isopentenyl diphosphate (IPP) and dimethylallyl diphosphate (DMAPP). Acts in the terminal step of the DOXP/MEP pathway for isoprenoid precursor biosynthesis.</text>
</comment>
<comment type="catalytic activity">
    <reaction evidence="1">
        <text>isopentenyl diphosphate + 2 oxidized [2Fe-2S]-[ferredoxin] + H2O = (2E)-4-hydroxy-3-methylbut-2-enyl diphosphate + 2 reduced [2Fe-2S]-[ferredoxin] + 2 H(+)</text>
        <dbReference type="Rhea" id="RHEA:24488"/>
        <dbReference type="Rhea" id="RHEA-COMP:10000"/>
        <dbReference type="Rhea" id="RHEA-COMP:10001"/>
        <dbReference type="ChEBI" id="CHEBI:15377"/>
        <dbReference type="ChEBI" id="CHEBI:15378"/>
        <dbReference type="ChEBI" id="CHEBI:33737"/>
        <dbReference type="ChEBI" id="CHEBI:33738"/>
        <dbReference type="ChEBI" id="CHEBI:128753"/>
        <dbReference type="ChEBI" id="CHEBI:128769"/>
        <dbReference type="EC" id="1.17.7.4"/>
    </reaction>
</comment>
<comment type="catalytic activity">
    <reaction evidence="1">
        <text>dimethylallyl diphosphate + 2 oxidized [2Fe-2S]-[ferredoxin] + H2O = (2E)-4-hydroxy-3-methylbut-2-enyl diphosphate + 2 reduced [2Fe-2S]-[ferredoxin] + 2 H(+)</text>
        <dbReference type="Rhea" id="RHEA:24825"/>
        <dbReference type="Rhea" id="RHEA-COMP:10000"/>
        <dbReference type="Rhea" id="RHEA-COMP:10001"/>
        <dbReference type="ChEBI" id="CHEBI:15377"/>
        <dbReference type="ChEBI" id="CHEBI:15378"/>
        <dbReference type="ChEBI" id="CHEBI:33737"/>
        <dbReference type="ChEBI" id="CHEBI:33738"/>
        <dbReference type="ChEBI" id="CHEBI:57623"/>
        <dbReference type="ChEBI" id="CHEBI:128753"/>
        <dbReference type="EC" id="1.17.7.4"/>
    </reaction>
</comment>
<comment type="cofactor">
    <cofactor evidence="1">
        <name>[4Fe-4S] cluster</name>
        <dbReference type="ChEBI" id="CHEBI:49883"/>
    </cofactor>
    <text evidence="1">Binds 1 [4Fe-4S] cluster per subunit.</text>
</comment>
<comment type="pathway">
    <text evidence="1">Isoprenoid biosynthesis; dimethylallyl diphosphate biosynthesis; dimethylallyl diphosphate from (2E)-4-hydroxy-3-methylbutenyl diphosphate: step 1/1.</text>
</comment>
<comment type="pathway">
    <text evidence="1">Isoprenoid biosynthesis; isopentenyl diphosphate biosynthesis via DXP pathway; isopentenyl diphosphate from 1-deoxy-D-xylulose 5-phosphate: step 6/6.</text>
</comment>
<comment type="similarity">
    <text evidence="1">Belongs to the IspH family.</text>
</comment>
<name>ISPH_ANOFW</name>
<sequence>MEVIKITPRGYCYGVVDAMVIARNAALNPTLPRPIYILGMIVHNKHVTDAFEEEGIITLDGPNRLEILENIDHGTVIFTAHGVSPEVKQRAREKGLVTIDATCPDVTKTHDLIREKVENGYEVIYIGKKGHPEPEGAIGVAPHAVHLIETPEDVEQLDIQSKRIIVTNQTTMSQWDVAHIMEKVKEKYPHVEMHREICLATQVRQEAVAEQAKEADVTIVVGDPRSNNSNRLAQVSEEIAGTKAYRVSDVTEIDIEWIKDAKKVAVTAGASTPTPITKEVIDFLEQFDPNNPETWKRERKVPLTKILPKVKKRGE</sequence>
<feature type="chain" id="PRO_1000118597" description="4-hydroxy-3-methylbut-2-enyl diphosphate reductase">
    <location>
        <begin position="1"/>
        <end position="315"/>
    </location>
</feature>
<feature type="active site" description="Proton donor" evidence="1">
    <location>
        <position position="133"/>
    </location>
</feature>
<feature type="binding site" evidence="1">
    <location>
        <position position="12"/>
    </location>
    <ligand>
        <name>[4Fe-4S] cluster</name>
        <dbReference type="ChEBI" id="CHEBI:49883"/>
    </ligand>
</feature>
<feature type="binding site" evidence="1">
    <location>
        <position position="43"/>
    </location>
    <ligand>
        <name>(2E)-4-hydroxy-3-methylbut-2-enyl diphosphate</name>
        <dbReference type="ChEBI" id="CHEBI:128753"/>
    </ligand>
</feature>
<feature type="binding site" evidence="1">
    <location>
        <position position="43"/>
    </location>
    <ligand>
        <name>dimethylallyl diphosphate</name>
        <dbReference type="ChEBI" id="CHEBI:57623"/>
    </ligand>
</feature>
<feature type="binding site" evidence="1">
    <location>
        <position position="43"/>
    </location>
    <ligand>
        <name>isopentenyl diphosphate</name>
        <dbReference type="ChEBI" id="CHEBI:128769"/>
    </ligand>
</feature>
<feature type="binding site" evidence="1">
    <location>
        <position position="81"/>
    </location>
    <ligand>
        <name>(2E)-4-hydroxy-3-methylbut-2-enyl diphosphate</name>
        <dbReference type="ChEBI" id="CHEBI:128753"/>
    </ligand>
</feature>
<feature type="binding site" evidence="1">
    <location>
        <position position="81"/>
    </location>
    <ligand>
        <name>dimethylallyl diphosphate</name>
        <dbReference type="ChEBI" id="CHEBI:57623"/>
    </ligand>
</feature>
<feature type="binding site" evidence="1">
    <location>
        <position position="81"/>
    </location>
    <ligand>
        <name>isopentenyl diphosphate</name>
        <dbReference type="ChEBI" id="CHEBI:128769"/>
    </ligand>
</feature>
<feature type="binding site" evidence="1">
    <location>
        <position position="103"/>
    </location>
    <ligand>
        <name>[4Fe-4S] cluster</name>
        <dbReference type="ChEBI" id="CHEBI:49883"/>
    </ligand>
</feature>
<feature type="binding site" evidence="1">
    <location>
        <position position="131"/>
    </location>
    <ligand>
        <name>(2E)-4-hydroxy-3-methylbut-2-enyl diphosphate</name>
        <dbReference type="ChEBI" id="CHEBI:128753"/>
    </ligand>
</feature>
<feature type="binding site" evidence="1">
    <location>
        <position position="131"/>
    </location>
    <ligand>
        <name>dimethylallyl diphosphate</name>
        <dbReference type="ChEBI" id="CHEBI:57623"/>
    </ligand>
</feature>
<feature type="binding site" evidence="1">
    <location>
        <position position="131"/>
    </location>
    <ligand>
        <name>isopentenyl diphosphate</name>
        <dbReference type="ChEBI" id="CHEBI:128769"/>
    </ligand>
</feature>
<feature type="binding site" evidence="1">
    <location>
        <position position="170"/>
    </location>
    <ligand>
        <name>(2E)-4-hydroxy-3-methylbut-2-enyl diphosphate</name>
        <dbReference type="ChEBI" id="CHEBI:128753"/>
    </ligand>
</feature>
<feature type="binding site" evidence="1">
    <location>
        <position position="198"/>
    </location>
    <ligand>
        <name>[4Fe-4S] cluster</name>
        <dbReference type="ChEBI" id="CHEBI:49883"/>
    </ligand>
</feature>
<feature type="binding site" evidence="1">
    <location>
        <position position="226"/>
    </location>
    <ligand>
        <name>(2E)-4-hydroxy-3-methylbut-2-enyl diphosphate</name>
        <dbReference type="ChEBI" id="CHEBI:128753"/>
    </ligand>
</feature>
<feature type="binding site" evidence="1">
    <location>
        <position position="226"/>
    </location>
    <ligand>
        <name>dimethylallyl diphosphate</name>
        <dbReference type="ChEBI" id="CHEBI:57623"/>
    </ligand>
</feature>
<feature type="binding site" evidence="1">
    <location>
        <position position="226"/>
    </location>
    <ligand>
        <name>isopentenyl diphosphate</name>
        <dbReference type="ChEBI" id="CHEBI:128769"/>
    </ligand>
</feature>
<feature type="binding site" evidence="1">
    <location>
        <position position="228"/>
    </location>
    <ligand>
        <name>(2E)-4-hydroxy-3-methylbut-2-enyl diphosphate</name>
        <dbReference type="ChEBI" id="CHEBI:128753"/>
    </ligand>
</feature>
<feature type="binding site" evidence="1">
    <location>
        <position position="228"/>
    </location>
    <ligand>
        <name>dimethylallyl diphosphate</name>
        <dbReference type="ChEBI" id="CHEBI:57623"/>
    </ligand>
</feature>
<feature type="binding site" evidence="1">
    <location>
        <position position="228"/>
    </location>
    <ligand>
        <name>isopentenyl diphosphate</name>
        <dbReference type="ChEBI" id="CHEBI:128769"/>
    </ligand>
</feature>
<feature type="binding site" evidence="1">
    <location>
        <position position="271"/>
    </location>
    <ligand>
        <name>(2E)-4-hydroxy-3-methylbut-2-enyl diphosphate</name>
        <dbReference type="ChEBI" id="CHEBI:128753"/>
    </ligand>
</feature>
<feature type="binding site" evidence="1">
    <location>
        <position position="271"/>
    </location>
    <ligand>
        <name>dimethylallyl diphosphate</name>
        <dbReference type="ChEBI" id="CHEBI:57623"/>
    </ligand>
</feature>
<feature type="binding site" evidence="1">
    <location>
        <position position="271"/>
    </location>
    <ligand>
        <name>isopentenyl diphosphate</name>
        <dbReference type="ChEBI" id="CHEBI:128769"/>
    </ligand>
</feature>
<accession>B7GH78</accession>
<keyword id="KW-0004">4Fe-4S</keyword>
<keyword id="KW-0408">Iron</keyword>
<keyword id="KW-0411">Iron-sulfur</keyword>
<keyword id="KW-0414">Isoprene biosynthesis</keyword>
<keyword id="KW-0479">Metal-binding</keyword>
<keyword id="KW-0560">Oxidoreductase</keyword>